<protein>
    <recommendedName>
        <fullName evidence="1">Aspartate 1-decarboxylase</fullName>
        <ecNumber evidence="1">4.1.1.11</ecNumber>
    </recommendedName>
    <alternativeName>
        <fullName evidence="1">Aspartate alpha-decarboxylase</fullName>
    </alternativeName>
    <component>
        <recommendedName>
            <fullName evidence="1">Aspartate 1-decarboxylase beta chain</fullName>
        </recommendedName>
    </component>
    <component>
        <recommendedName>
            <fullName evidence="1">Aspartate 1-decarboxylase alpha chain</fullName>
        </recommendedName>
    </component>
</protein>
<name>PAND_MYCUA</name>
<dbReference type="EC" id="4.1.1.11" evidence="1"/>
<dbReference type="EMBL" id="CP000325">
    <property type="protein sequence ID" value="ABL06218.1"/>
    <property type="status" value="ALT_INIT"/>
    <property type="molecule type" value="Genomic_DNA"/>
</dbReference>
<dbReference type="RefSeq" id="WP_012396624.1">
    <property type="nucleotide sequence ID" value="NC_008611.1"/>
</dbReference>
<dbReference type="SMR" id="A0PV49"/>
<dbReference type="KEGG" id="mul:MUL_4183"/>
<dbReference type="eggNOG" id="COG0853">
    <property type="taxonomic scope" value="Bacteria"/>
</dbReference>
<dbReference type="HOGENOM" id="CLU_115305_2_0_11"/>
<dbReference type="UniPathway" id="UPA00028">
    <property type="reaction ID" value="UER00002"/>
</dbReference>
<dbReference type="Proteomes" id="UP000000765">
    <property type="component" value="Chromosome"/>
</dbReference>
<dbReference type="GO" id="GO:0005829">
    <property type="term" value="C:cytosol"/>
    <property type="evidence" value="ECO:0007669"/>
    <property type="project" value="TreeGrafter"/>
</dbReference>
<dbReference type="GO" id="GO:0004068">
    <property type="term" value="F:aspartate 1-decarboxylase activity"/>
    <property type="evidence" value="ECO:0007669"/>
    <property type="project" value="UniProtKB-UniRule"/>
</dbReference>
<dbReference type="GO" id="GO:0006523">
    <property type="term" value="P:alanine biosynthetic process"/>
    <property type="evidence" value="ECO:0007669"/>
    <property type="project" value="InterPro"/>
</dbReference>
<dbReference type="GO" id="GO:0015940">
    <property type="term" value="P:pantothenate biosynthetic process"/>
    <property type="evidence" value="ECO:0007669"/>
    <property type="project" value="UniProtKB-UniRule"/>
</dbReference>
<dbReference type="CDD" id="cd06919">
    <property type="entry name" value="Asp_decarbox"/>
    <property type="match status" value="1"/>
</dbReference>
<dbReference type="Gene3D" id="2.40.40.20">
    <property type="match status" value="1"/>
</dbReference>
<dbReference type="HAMAP" id="MF_00446">
    <property type="entry name" value="PanD"/>
    <property type="match status" value="1"/>
</dbReference>
<dbReference type="InterPro" id="IPR009010">
    <property type="entry name" value="Asp_de-COase-like_dom_sf"/>
</dbReference>
<dbReference type="InterPro" id="IPR003190">
    <property type="entry name" value="Asp_decarbox"/>
</dbReference>
<dbReference type="NCBIfam" id="TIGR00223">
    <property type="entry name" value="panD"/>
    <property type="match status" value="1"/>
</dbReference>
<dbReference type="PANTHER" id="PTHR21012">
    <property type="entry name" value="ASPARTATE 1-DECARBOXYLASE"/>
    <property type="match status" value="1"/>
</dbReference>
<dbReference type="PANTHER" id="PTHR21012:SF0">
    <property type="entry name" value="ASPARTATE 1-DECARBOXYLASE"/>
    <property type="match status" value="1"/>
</dbReference>
<dbReference type="Pfam" id="PF02261">
    <property type="entry name" value="Asp_decarbox"/>
    <property type="match status" value="1"/>
</dbReference>
<dbReference type="PIRSF" id="PIRSF006246">
    <property type="entry name" value="Asp_decarbox"/>
    <property type="match status" value="1"/>
</dbReference>
<dbReference type="SUPFAM" id="SSF50692">
    <property type="entry name" value="ADC-like"/>
    <property type="match status" value="1"/>
</dbReference>
<feature type="chain" id="PRO_0000307031" description="Aspartate 1-decarboxylase beta chain" evidence="1">
    <location>
        <begin position="1"/>
        <end position="24"/>
    </location>
</feature>
<feature type="chain" id="PRO_0000307032" description="Aspartate 1-decarboxylase alpha chain" evidence="1">
    <location>
        <begin position="25"/>
        <end position="143"/>
    </location>
</feature>
<feature type="active site" description="Schiff-base intermediate with substrate; via pyruvic acid" evidence="1">
    <location>
        <position position="25"/>
    </location>
</feature>
<feature type="active site" description="Proton donor" evidence="1">
    <location>
        <position position="58"/>
    </location>
</feature>
<feature type="binding site" evidence="1">
    <location>
        <position position="57"/>
    </location>
    <ligand>
        <name>substrate</name>
    </ligand>
</feature>
<feature type="binding site" evidence="1">
    <location>
        <begin position="73"/>
        <end position="75"/>
    </location>
    <ligand>
        <name>substrate</name>
    </ligand>
</feature>
<feature type="modified residue" description="Pyruvic acid (Ser)" evidence="1">
    <location>
        <position position="25"/>
    </location>
</feature>
<comment type="function">
    <text evidence="1">Catalyzes the pyruvoyl-dependent decarboxylation of aspartate to produce beta-alanine.</text>
</comment>
<comment type="catalytic activity">
    <reaction evidence="1">
        <text>L-aspartate + H(+) = beta-alanine + CO2</text>
        <dbReference type="Rhea" id="RHEA:19497"/>
        <dbReference type="ChEBI" id="CHEBI:15378"/>
        <dbReference type="ChEBI" id="CHEBI:16526"/>
        <dbReference type="ChEBI" id="CHEBI:29991"/>
        <dbReference type="ChEBI" id="CHEBI:57966"/>
        <dbReference type="EC" id="4.1.1.11"/>
    </reaction>
</comment>
<comment type="cofactor">
    <cofactor evidence="1">
        <name>pyruvate</name>
        <dbReference type="ChEBI" id="CHEBI:15361"/>
    </cofactor>
    <text evidence="1">Binds 1 pyruvoyl group covalently per subunit.</text>
</comment>
<comment type="pathway">
    <text evidence="1">Cofactor biosynthesis; (R)-pantothenate biosynthesis; beta-alanine from L-aspartate: step 1/1.</text>
</comment>
<comment type="subunit">
    <text evidence="1">Heterooctamer of four alpha and four beta subunits.</text>
</comment>
<comment type="subcellular location">
    <subcellularLocation>
        <location evidence="1">Cytoplasm</location>
    </subcellularLocation>
</comment>
<comment type="PTM">
    <text evidence="1">Is synthesized initially as an inactive proenzyme, which is activated by self-cleavage at a specific serine bond to produce a beta-subunit with a hydroxyl group at its C-terminus and an alpha-subunit with a pyruvoyl group at its N-terminus.</text>
</comment>
<comment type="similarity">
    <text evidence="1">Belongs to the PanD family.</text>
</comment>
<comment type="sequence caution" evidence="2">
    <conflict type="erroneous initiation">
        <sequence resource="EMBL-CDS" id="ABL06218"/>
    </conflict>
</comment>
<organism>
    <name type="scientific">Mycobacterium ulcerans (strain Agy99)</name>
    <dbReference type="NCBI Taxonomy" id="362242"/>
    <lineage>
        <taxon>Bacteria</taxon>
        <taxon>Bacillati</taxon>
        <taxon>Actinomycetota</taxon>
        <taxon>Actinomycetes</taxon>
        <taxon>Mycobacteriales</taxon>
        <taxon>Mycobacteriaceae</taxon>
        <taxon>Mycobacterium</taxon>
        <taxon>Mycobacterium ulcerans group</taxon>
    </lineage>
</organism>
<reference key="1">
    <citation type="journal article" date="2007" name="Genome Res.">
        <title>Reductive evolution and niche adaptation inferred from the genome of Mycobacterium ulcerans, the causative agent of Buruli ulcer.</title>
        <authorList>
            <person name="Stinear T.P."/>
            <person name="Seemann T."/>
            <person name="Pidot S."/>
            <person name="Frigui W."/>
            <person name="Reysset G."/>
            <person name="Garnier T."/>
            <person name="Meurice G."/>
            <person name="Simon D."/>
            <person name="Bouchier C."/>
            <person name="Ma L."/>
            <person name="Tichit M."/>
            <person name="Porter J.L."/>
            <person name="Ryan J."/>
            <person name="Johnson P.D.R."/>
            <person name="Davies J.K."/>
            <person name="Jenkin G.A."/>
            <person name="Small P.L.C."/>
            <person name="Jones L.M."/>
            <person name="Tekaia F."/>
            <person name="Laval F."/>
            <person name="Daffe M."/>
            <person name="Parkhill J."/>
            <person name="Cole S.T."/>
        </authorList>
    </citation>
    <scope>NUCLEOTIDE SEQUENCE [LARGE SCALE GENOMIC DNA]</scope>
    <source>
        <strain>Agy99</strain>
    </source>
</reference>
<gene>
    <name evidence="1" type="primary">panD</name>
    <name type="ordered locus">MUL_4183</name>
</gene>
<sequence length="143" mass="15302">MLRTMLKSKIHRATVTQADLHYVGSVTIDADLMDAADLLEGEQVTIVDIDNGARLVTYAITGERGSGVIGINGAAAHLVHPGDLVILIAYGTMQDAEARAYQPRIVFVDADNKQIDVGHDPAFVPAFDIPGAEELLNPRIGAR</sequence>
<proteinExistence type="inferred from homology"/>
<accession>A0PV49</accession>
<evidence type="ECO:0000255" key="1">
    <source>
        <dbReference type="HAMAP-Rule" id="MF_00446"/>
    </source>
</evidence>
<evidence type="ECO:0000305" key="2"/>
<keyword id="KW-0068">Autocatalytic cleavage</keyword>
<keyword id="KW-0963">Cytoplasm</keyword>
<keyword id="KW-0210">Decarboxylase</keyword>
<keyword id="KW-0456">Lyase</keyword>
<keyword id="KW-0566">Pantothenate biosynthesis</keyword>
<keyword id="KW-0670">Pyruvate</keyword>
<keyword id="KW-0704">Schiff base</keyword>
<keyword id="KW-0865">Zymogen</keyword>